<evidence type="ECO:0000255" key="1">
    <source>
        <dbReference type="HAMAP-Rule" id="MF_01323"/>
    </source>
</evidence>
<proteinExistence type="inferred from homology"/>
<name>RPOC1_OENPA</name>
<geneLocation type="chloroplast"/>
<dbReference type="EC" id="2.7.7.6" evidence="1"/>
<dbReference type="EMBL" id="EU262891">
    <property type="protein sequence ID" value="ABX10121.1"/>
    <property type="molecule type" value="Genomic_DNA"/>
</dbReference>
<dbReference type="RefSeq" id="YP_001687451.1">
    <property type="nucleotide sequence ID" value="NC_010362.1"/>
</dbReference>
<dbReference type="SMR" id="B0Z5C8"/>
<dbReference type="GeneID" id="5955465"/>
<dbReference type="GO" id="GO:0009507">
    <property type="term" value="C:chloroplast"/>
    <property type="evidence" value="ECO:0007669"/>
    <property type="project" value="UniProtKB-SubCell"/>
</dbReference>
<dbReference type="GO" id="GO:0000428">
    <property type="term" value="C:DNA-directed RNA polymerase complex"/>
    <property type="evidence" value="ECO:0007669"/>
    <property type="project" value="UniProtKB-KW"/>
</dbReference>
<dbReference type="GO" id="GO:0005739">
    <property type="term" value="C:mitochondrion"/>
    <property type="evidence" value="ECO:0007669"/>
    <property type="project" value="GOC"/>
</dbReference>
<dbReference type="GO" id="GO:0003677">
    <property type="term" value="F:DNA binding"/>
    <property type="evidence" value="ECO:0007669"/>
    <property type="project" value="UniProtKB-UniRule"/>
</dbReference>
<dbReference type="GO" id="GO:0003899">
    <property type="term" value="F:DNA-directed RNA polymerase activity"/>
    <property type="evidence" value="ECO:0007669"/>
    <property type="project" value="UniProtKB-UniRule"/>
</dbReference>
<dbReference type="GO" id="GO:0000287">
    <property type="term" value="F:magnesium ion binding"/>
    <property type="evidence" value="ECO:0007669"/>
    <property type="project" value="UniProtKB-UniRule"/>
</dbReference>
<dbReference type="GO" id="GO:0008270">
    <property type="term" value="F:zinc ion binding"/>
    <property type="evidence" value="ECO:0007669"/>
    <property type="project" value="UniProtKB-UniRule"/>
</dbReference>
<dbReference type="GO" id="GO:0006351">
    <property type="term" value="P:DNA-templated transcription"/>
    <property type="evidence" value="ECO:0007669"/>
    <property type="project" value="UniProtKB-UniRule"/>
</dbReference>
<dbReference type="FunFam" id="4.10.860.120:FF:000007">
    <property type="entry name" value="DNA-directed RNA polymerase subunit gamma"/>
    <property type="match status" value="1"/>
</dbReference>
<dbReference type="Gene3D" id="1.10.40.90">
    <property type="match status" value="1"/>
</dbReference>
<dbReference type="Gene3D" id="2.40.40.20">
    <property type="match status" value="1"/>
</dbReference>
<dbReference type="Gene3D" id="4.10.860.120">
    <property type="entry name" value="RNA polymerase II, clamp domain"/>
    <property type="match status" value="1"/>
</dbReference>
<dbReference type="Gene3D" id="1.10.274.100">
    <property type="entry name" value="RNA polymerase Rpb1, domain 3"/>
    <property type="match status" value="1"/>
</dbReference>
<dbReference type="HAMAP" id="MF_01323">
    <property type="entry name" value="RNApol_bact_RpoC1"/>
    <property type="match status" value="1"/>
</dbReference>
<dbReference type="InterPro" id="IPR045867">
    <property type="entry name" value="DNA-dir_RpoC_beta_prime"/>
</dbReference>
<dbReference type="InterPro" id="IPR000722">
    <property type="entry name" value="RNA_pol_asu"/>
</dbReference>
<dbReference type="InterPro" id="IPR006592">
    <property type="entry name" value="RNA_pol_N"/>
</dbReference>
<dbReference type="InterPro" id="IPR007080">
    <property type="entry name" value="RNA_pol_Rpb1_1"/>
</dbReference>
<dbReference type="InterPro" id="IPR042102">
    <property type="entry name" value="RNA_pol_Rpb1_3_sf"/>
</dbReference>
<dbReference type="InterPro" id="IPR044893">
    <property type="entry name" value="RNA_pol_Rpb1_clamp_domain"/>
</dbReference>
<dbReference type="InterPro" id="IPR034678">
    <property type="entry name" value="RNApol_RpoC1"/>
</dbReference>
<dbReference type="PANTHER" id="PTHR19376">
    <property type="entry name" value="DNA-DIRECTED RNA POLYMERASE"/>
    <property type="match status" value="1"/>
</dbReference>
<dbReference type="PANTHER" id="PTHR19376:SF54">
    <property type="entry name" value="DNA-DIRECTED RNA POLYMERASE SUBUNIT BETA"/>
    <property type="match status" value="1"/>
</dbReference>
<dbReference type="Pfam" id="PF04997">
    <property type="entry name" value="RNA_pol_Rpb1_1"/>
    <property type="match status" value="2"/>
</dbReference>
<dbReference type="Pfam" id="PF00623">
    <property type="entry name" value="RNA_pol_Rpb1_2"/>
    <property type="match status" value="1"/>
</dbReference>
<dbReference type="SMART" id="SM00663">
    <property type="entry name" value="RPOLA_N"/>
    <property type="match status" value="1"/>
</dbReference>
<dbReference type="SUPFAM" id="SSF64484">
    <property type="entry name" value="beta and beta-prime subunits of DNA dependent RNA-polymerase"/>
    <property type="match status" value="1"/>
</dbReference>
<protein>
    <recommendedName>
        <fullName evidence="1">DNA-directed RNA polymerase subunit beta'</fullName>
        <ecNumber evidence="1">2.7.7.6</ecNumber>
    </recommendedName>
    <alternativeName>
        <fullName evidence="1">PEP</fullName>
    </alternativeName>
    <alternativeName>
        <fullName evidence="1">Plastid-encoded RNA polymerase subunit beta'</fullName>
        <shortName evidence="1">RNA polymerase subunit beta'</shortName>
    </alternativeName>
</protein>
<organism>
    <name type="scientific">Oenothera parviflora</name>
    <name type="common">Small-flowered evening primrose</name>
    <name type="synonym">Oenothera cruciata</name>
    <dbReference type="NCBI Taxonomy" id="482429"/>
    <lineage>
        <taxon>Eukaryota</taxon>
        <taxon>Viridiplantae</taxon>
        <taxon>Streptophyta</taxon>
        <taxon>Embryophyta</taxon>
        <taxon>Tracheophyta</taxon>
        <taxon>Spermatophyta</taxon>
        <taxon>Magnoliopsida</taxon>
        <taxon>eudicotyledons</taxon>
        <taxon>Gunneridae</taxon>
        <taxon>Pentapetalae</taxon>
        <taxon>rosids</taxon>
        <taxon>malvids</taxon>
        <taxon>Myrtales</taxon>
        <taxon>Onagraceae</taxon>
        <taxon>Onagroideae</taxon>
        <taxon>Onagreae</taxon>
        <taxon>Oenothera</taxon>
    </lineage>
</organism>
<sequence length="679" mass="78534">MIDRYKHQQLRIGSVSPQQISTWANKILPNGEIVGEVTKPYTFHYKTNKPERDGLFCERIFGPIKSGICACGTYRVIGDKKEDPNFCEQCGVEFVDSRIRRYQMGYIKLACPATHVWYLKRLPSYIANLLDKPLKELEGLVYCDFSFARPVAKKPTFLRLRGLFEYEIQSWKYSIPLFFTTQGFDTFRNREISTGAGAIREQLAGLDLRVIIDYSLVEWKELGEERSTGNEWEDRKIGRRKQFLVRRVELAKHFIRTNIEPEWMVLCLLPVLPPELRPIIQMDGGKLMSSDINELYRRVIYRNNILADLLTTSRSTPGDLVMGQEKLVQEAVDTLLDNGIRSRPVRDGQNKVYKSFSDVIEGKEGRFRETLLGKRVDYSGRSVIVVGPTLPLHRCGLPREIAIELFQTFLIRGLIRQHLASDIVGAKSQIREKEPIVWEILQQVMQGHPVLLNRAPTLHRLGIQAFQPILVEGRAICLHPLVCKGFNADFDGDQMAVHVPLSLEAQTEARLLMFSHMNLLSPAMGDPISVPTQDMLIGLYILTSGNPRGICTNRYNPWNRSNYQNERISDNNWKKKEPFFCNSYDAIGAYRQKRIHLDSPLWLRWRLDQRVIASREVPIEVQYESLGTYHEIYGHYIIVRSVKTEILWMYIRTTVGHISLFREMEEAIQGFCRARWYLS</sequence>
<accession>B0Z5C8</accession>
<keyword id="KW-0150">Chloroplast</keyword>
<keyword id="KW-0240">DNA-directed RNA polymerase</keyword>
<keyword id="KW-0460">Magnesium</keyword>
<keyword id="KW-0479">Metal-binding</keyword>
<keyword id="KW-0548">Nucleotidyltransferase</keyword>
<keyword id="KW-0934">Plastid</keyword>
<keyword id="KW-0804">Transcription</keyword>
<keyword id="KW-0808">Transferase</keyword>
<keyword id="KW-0862">Zinc</keyword>
<gene>
    <name evidence="1" type="primary">rpoC1</name>
</gene>
<feature type="chain" id="PRO_0000353507" description="DNA-directed RNA polymerase subunit beta'">
    <location>
        <begin position="1"/>
        <end position="679"/>
    </location>
</feature>
<feature type="binding site" evidence="1">
    <location>
        <position position="69"/>
    </location>
    <ligand>
        <name>Zn(2+)</name>
        <dbReference type="ChEBI" id="CHEBI:29105"/>
    </ligand>
</feature>
<feature type="binding site" evidence="1">
    <location>
        <position position="71"/>
    </location>
    <ligand>
        <name>Zn(2+)</name>
        <dbReference type="ChEBI" id="CHEBI:29105"/>
    </ligand>
</feature>
<feature type="binding site" evidence="1">
    <location>
        <position position="87"/>
    </location>
    <ligand>
        <name>Zn(2+)</name>
        <dbReference type="ChEBI" id="CHEBI:29105"/>
    </ligand>
</feature>
<feature type="binding site" evidence="1">
    <location>
        <position position="90"/>
    </location>
    <ligand>
        <name>Zn(2+)</name>
        <dbReference type="ChEBI" id="CHEBI:29105"/>
    </ligand>
</feature>
<feature type="binding site" evidence="1">
    <location>
        <position position="489"/>
    </location>
    <ligand>
        <name>Mg(2+)</name>
        <dbReference type="ChEBI" id="CHEBI:18420"/>
    </ligand>
</feature>
<feature type="binding site" evidence="1">
    <location>
        <position position="491"/>
    </location>
    <ligand>
        <name>Mg(2+)</name>
        <dbReference type="ChEBI" id="CHEBI:18420"/>
    </ligand>
</feature>
<feature type="binding site" evidence="1">
    <location>
        <position position="493"/>
    </location>
    <ligand>
        <name>Mg(2+)</name>
        <dbReference type="ChEBI" id="CHEBI:18420"/>
    </ligand>
</feature>
<comment type="function">
    <text evidence="1">DNA-dependent RNA polymerase catalyzes the transcription of DNA into RNA using the four ribonucleoside triphosphates as substrates.</text>
</comment>
<comment type="catalytic activity">
    <reaction evidence="1">
        <text>RNA(n) + a ribonucleoside 5'-triphosphate = RNA(n+1) + diphosphate</text>
        <dbReference type="Rhea" id="RHEA:21248"/>
        <dbReference type="Rhea" id="RHEA-COMP:14527"/>
        <dbReference type="Rhea" id="RHEA-COMP:17342"/>
        <dbReference type="ChEBI" id="CHEBI:33019"/>
        <dbReference type="ChEBI" id="CHEBI:61557"/>
        <dbReference type="ChEBI" id="CHEBI:140395"/>
        <dbReference type="EC" id="2.7.7.6"/>
    </reaction>
</comment>
<comment type="cofactor">
    <cofactor evidence="1">
        <name>Mg(2+)</name>
        <dbReference type="ChEBI" id="CHEBI:18420"/>
    </cofactor>
    <text evidence="1">Binds 1 Mg(2+) ion per subunit.</text>
</comment>
<comment type="cofactor">
    <cofactor evidence="1">
        <name>Zn(2+)</name>
        <dbReference type="ChEBI" id="CHEBI:29105"/>
    </cofactor>
    <text evidence="1">Binds 1 Zn(2+) ion per subunit.</text>
</comment>
<comment type="subunit">
    <text evidence="1">In plastids the minimal PEP RNA polymerase catalytic core is composed of four subunits: alpha, beta, beta', and beta''. When a (nuclear-encoded) sigma factor is associated with the core the holoenzyme is formed, which can initiate transcription.</text>
</comment>
<comment type="subcellular location">
    <subcellularLocation>
        <location evidence="1">Plastid</location>
        <location evidence="1">Chloroplast</location>
    </subcellularLocation>
</comment>
<comment type="similarity">
    <text evidence="1">Belongs to the RNA polymerase beta' chain family. RpoC1 subfamily.</text>
</comment>
<reference key="1">
    <citation type="journal article" date="2008" name="Nucleic Acids Res.">
        <title>The complete nucleotide sequences of the five genetically distinct plastid genomes of Oenothera, subsection Oenothera: I. Sequence evaluation and plastome evolution.</title>
        <authorList>
            <person name="Greiner S."/>
            <person name="Wang X."/>
            <person name="Rauwolf U."/>
            <person name="Silber M.V."/>
            <person name="Mayer K."/>
            <person name="Meurer J."/>
            <person name="Haberer G."/>
            <person name="Herrmann R.G."/>
        </authorList>
    </citation>
    <scope>NUCLEOTIDE SEQUENCE [LARGE SCALE GENOMIC DNA]</scope>
    <source>
        <strain>cv. Atrovirens</strain>
    </source>
</reference>